<keyword id="KW-0460">Magnesium</keyword>
<keyword id="KW-0479">Metal-binding</keyword>
<keyword id="KW-0784">Thiamine biosynthesis</keyword>
<keyword id="KW-0808">Transferase</keyword>
<gene>
    <name evidence="1" type="primary">thiE</name>
    <name type="ordered locus">Syncc9605_0896</name>
</gene>
<name>THIE_SYNSC</name>
<feature type="chain" id="PRO_1000052342" description="Thiamine-phosphate synthase">
    <location>
        <begin position="1"/>
        <end position="352"/>
    </location>
</feature>
<feature type="region of interest" description="Unknown">
    <location>
        <begin position="1"/>
        <end position="128"/>
    </location>
</feature>
<feature type="region of interest" description="Disordered" evidence="2">
    <location>
        <begin position="63"/>
        <end position="85"/>
    </location>
</feature>
<feature type="region of interest" description="Thiamine-phosphate synthase">
    <location>
        <begin position="129"/>
        <end position="352"/>
    </location>
</feature>
<feature type="binding site" evidence="1">
    <location>
        <begin position="180"/>
        <end position="184"/>
    </location>
    <ligand>
        <name>4-amino-2-methyl-5-(diphosphooxymethyl)pyrimidine</name>
        <dbReference type="ChEBI" id="CHEBI:57841"/>
    </ligand>
</feature>
<feature type="binding site" evidence="1">
    <location>
        <position position="212"/>
    </location>
    <ligand>
        <name>4-amino-2-methyl-5-(diphosphooxymethyl)pyrimidine</name>
        <dbReference type="ChEBI" id="CHEBI:57841"/>
    </ligand>
</feature>
<feature type="binding site" evidence="1">
    <location>
        <position position="213"/>
    </location>
    <ligand>
        <name>Mg(2+)</name>
        <dbReference type="ChEBI" id="CHEBI:18420"/>
    </ligand>
</feature>
<feature type="binding site" evidence="1">
    <location>
        <position position="232"/>
    </location>
    <ligand>
        <name>Mg(2+)</name>
        <dbReference type="ChEBI" id="CHEBI:18420"/>
    </ligand>
</feature>
<feature type="binding site" evidence="1">
    <location>
        <position position="251"/>
    </location>
    <ligand>
        <name>4-amino-2-methyl-5-(diphosphooxymethyl)pyrimidine</name>
        <dbReference type="ChEBI" id="CHEBI:57841"/>
    </ligand>
</feature>
<feature type="binding site" evidence="1">
    <location>
        <position position="280"/>
    </location>
    <ligand>
        <name>4-amino-2-methyl-5-(diphosphooxymethyl)pyrimidine</name>
        <dbReference type="ChEBI" id="CHEBI:57841"/>
    </ligand>
</feature>
<feature type="binding site" evidence="1">
    <location>
        <position position="307"/>
    </location>
    <ligand>
        <name>2-[(2R,5Z)-2-carboxy-4-methylthiazol-5(2H)-ylidene]ethyl phosphate</name>
        <dbReference type="ChEBI" id="CHEBI:62899"/>
    </ligand>
</feature>
<dbReference type="EC" id="2.5.1.3" evidence="1"/>
<dbReference type="EMBL" id="CP000110">
    <property type="protein sequence ID" value="ABB34664.1"/>
    <property type="molecule type" value="Genomic_DNA"/>
</dbReference>
<dbReference type="RefSeq" id="WP_011363888.1">
    <property type="nucleotide sequence ID" value="NC_007516.1"/>
</dbReference>
<dbReference type="SMR" id="Q3AL68"/>
<dbReference type="STRING" id="110662.Syncc9605_0896"/>
<dbReference type="KEGG" id="syd:Syncc9605_0896"/>
<dbReference type="eggNOG" id="COG0352">
    <property type="taxonomic scope" value="Bacteria"/>
</dbReference>
<dbReference type="HOGENOM" id="CLU_064900_0_0_3"/>
<dbReference type="OrthoDB" id="9812206at2"/>
<dbReference type="UniPathway" id="UPA00060">
    <property type="reaction ID" value="UER00141"/>
</dbReference>
<dbReference type="GO" id="GO:0005737">
    <property type="term" value="C:cytoplasm"/>
    <property type="evidence" value="ECO:0007669"/>
    <property type="project" value="TreeGrafter"/>
</dbReference>
<dbReference type="GO" id="GO:0000287">
    <property type="term" value="F:magnesium ion binding"/>
    <property type="evidence" value="ECO:0007669"/>
    <property type="project" value="UniProtKB-UniRule"/>
</dbReference>
<dbReference type="GO" id="GO:0004789">
    <property type="term" value="F:thiamine-phosphate diphosphorylase activity"/>
    <property type="evidence" value="ECO:0007669"/>
    <property type="project" value="UniProtKB-UniRule"/>
</dbReference>
<dbReference type="GO" id="GO:0009228">
    <property type="term" value="P:thiamine biosynthetic process"/>
    <property type="evidence" value="ECO:0007669"/>
    <property type="project" value="UniProtKB-KW"/>
</dbReference>
<dbReference type="GO" id="GO:0009229">
    <property type="term" value="P:thiamine diphosphate biosynthetic process"/>
    <property type="evidence" value="ECO:0007669"/>
    <property type="project" value="UniProtKB-UniRule"/>
</dbReference>
<dbReference type="CDD" id="cd00564">
    <property type="entry name" value="TMP_TenI"/>
    <property type="match status" value="1"/>
</dbReference>
<dbReference type="FunFam" id="3.20.20.70:FF:000096">
    <property type="entry name" value="Thiamine-phosphate synthase"/>
    <property type="match status" value="1"/>
</dbReference>
<dbReference type="Gene3D" id="3.20.20.70">
    <property type="entry name" value="Aldolase class I"/>
    <property type="match status" value="1"/>
</dbReference>
<dbReference type="HAMAP" id="MF_00097">
    <property type="entry name" value="TMP_synthase"/>
    <property type="match status" value="1"/>
</dbReference>
<dbReference type="HAMAP" id="MF_01327">
    <property type="entry name" value="TMP_synthase_cyanobact"/>
    <property type="match status" value="1"/>
</dbReference>
<dbReference type="InterPro" id="IPR013785">
    <property type="entry name" value="Aldolase_TIM"/>
</dbReference>
<dbReference type="InterPro" id="IPR036206">
    <property type="entry name" value="ThiamineP_synth_sf"/>
</dbReference>
<dbReference type="InterPro" id="IPR022998">
    <property type="entry name" value="ThiamineP_synth_TenI"/>
</dbReference>
<dbReference type="InterPro" id="IPR041397">
    <property type="entry name" value="ThiD2"/>
</dbReference>
<dbReference type="InterPro" id="IPR034291">
    <property type="entry name" value="TMP_synthase"/>
</dbReference>
<dbReference type="InterPro" id="IPR016229">
    <property type="entry name" value="TMP_synthase_cyanobac_bac"/>
</dbReference>
<dbReference type="NCBIfam" id="NF002727">
    <property type="entry name" value="PRK02615.1"/>
    <property type="match status" value="1"/>
</dbReference>
<dbReference type="NCBIfam" id="TIGR00693">
    <property type="entry name" value="thiE"/>
    <property type="match status" value="1"/>
</dbReference>
<dbReference type="PANTHER" id="PTHR20857">
    <property type="entry name" value="THIAMINE-PHOSPHATE PYROPHOSPHORYLASE"/>
    <property type="match status" value="1"/>
</dbReference>
<dbReference type="PANTHER" id="PTHR20857:SF15">
    <property type="entry name" value="THIAMINE-PHOSPHATE SYNTHASE"/>
    <property type="match status" value="1"/>
</dbReference>
<dbReference type="Pfam" id="PF17792">
    <property type="entry name" value="ThiD2"/>
    <property type="match status" value="1"/>
</dbReference>
<dbReference type="Pfam" id="PF02581">
    <property type="entry name" value="TMP-TENI"/>
    <property type="match status" value="1"/>
</dbReference>
<dbReference type="PIRSF" id="PIRSF000512">
    <property type="entry name" value="TMP_PPase_Cyanobac_prd"/>
    <property type="match status" value="1"/>
</dbReference>
<dbReference type="SUPFAM" id="SSF51391">
    <property type="entry name" value="Thiamin phosphate synthase"/>
    <property type="match status" value="1"/>
</dbReference>
<accession>Q3AL68</accession>
<comment type="function">
    <text evidence="1">Condenses 4-methyl-5-(beta-hydroxyethyl)thiazole monophosphate (THZ-P) and 2-methyl-4-amino-5-hydroxymethyl pyrimidine pyrophosphate (HMP-PP) to form thiamine monophosphate (TMP).</text>
</comment>
<comment type="catalytic activity">
    <reaction evidence="1">
        <text>2-[(2R,5Z)-2-carboxy-4-methylthiazol-5(2H)-ylidene]ethyl phosphate + 4-amino-2-methyl-5-(diphosphooxymethyl)pyrimidine + 2 H(+) = thiamine phosphate + CO2 + diphosphate</text>
        <dbReference type="Rhea" id="RHEA:47844"/>
        <dbReference type="ChEBI" id="CHEBI:15378"/>
        <dbReference type="ChEBI" id="CHEBI:16526"/>
        <dbReference type="ChEBI" id="CHEBI:33019"/>
        <dbReference type="ChEBI" id="CHEBI:37575"/>
        <dbReference type="ChEBI" id="CHEBI:57841"/>
        <dbReference type="ChEBI" id="CHEBI:62899"/>
        <dbReference type="EC" id="2.5.1.3"/>
    </reaction>
</comment>
<comment type="catalytic activity">
    <reaction evidence="1">
        <text>2-(2-carboxy-4-methylthiazol-5-yl)ethyl phosphate + 4-amino-2-methyl-5-(diphosphooxymethyl)pyrimidine + 2 H(+) = thiamine phosphate + CO2 + diphosphate</text>
        <dbReference type="Rhea" id="RHEA:47848"/>
        <dbReference type="ChEBI" id="CHEBI:15378"/>
        <dbReference type="ChEBI" id="CHEBI:16526"/>
        <dbReference type="ChEBI" id="CHEBI:33019"/>
        <dbReference type="ChEBI" id="CHEBI:37575"/>
        <dbReference type="ChEBI" id="CHEBI:57841"/>
        <dbReference type="ChEBI" id="CHEBI:62890"/>
        <dbReference type="EC" id="2.5.1.3"/>
    </reaction>
</comment>
<comment type="catalytic activity">
    <reaction evidence="1">
        <text>4-methyl-5-(2-phosphooxyethyl)-thiazole + 4-amino-2-methyl-5-(diphosphooxymethyl)pyrimidine + H(+) = thiamine phosphate + diphosphate</text>
        <dbReference type="Rhea" id="RHEA:22328"/>
        <dbReference type="ChEBI" id="CHEBI:15378"/>
        <dbReference type="ChEBI" id="CHEBI:33019"/>
        <dbReference type="ChEBI" id="CHEBI:37575"/>
        <dbReference type="ChEBI" id="CHEBI:57841"/>
        <dbReference type="ChEBI" id="CHEBI:58296"/>
        <dbReference type="EC" id="2.5.1.3"/>
    </reaction>
</comment>
<comment type="cofactor">
    <cofactor evidence="1">
        <name>Mg(2+)</name>
        <dbReference type="ChEBI" id="CHEBI:18420"/>
    </cofactor>
    <text evidence="1">Binds 1 Mg(2+) ion per subunit.</text>
</comment>
<comment type="pathway">
    <text evidence="1">Cofactor biosynthesis; thiamine diphosphate biosynthesis; thiamine phosphate from 4-amino-2-methyl-5-diphosphomethylpyrimidine and 4-methyl-5-(2-phosphoethyl)-thiazole: step 1/1.</text>
</comment>
<comment type="similarity">
    <text evidence="1">Belongs to the thiamine-phosphate synthase family.</text>
</comment>
<proteinExistence type="inferred from homology"/>
<sequence length="352" mass="38642">MNPTPSETSLDPRVARLIDANLDRAREGLRVVEDWCRFGLEQQDLVVRLKDWRQRLGRLHHDSYKQARSTSTDTGAGLKHPAQLDRHSPDRVVAANCARAQEALRVLEEYGRTIDPALAAEAAAIRYGLYDLEVTCLNATLGARRRNKLKDACLCLITTPCDDLTDRVEAALRNGVGMVQYRCKAGNDRERLQEAQQLRQLCNKFGALLLINDRVDLALAVDADGVHLGQEDMPSEVARDLLGVDRLLGRSTHSIDQVHQAQQEPIDYLGFGPIHSTAVKPERNPVGVELLAKATAISQRPVFAIGGITPANLPALLMAGGQRAAVIGAIMHSEDSGQATRHLLQQLDQATI</sequence>
<organism>
    <name type="scientific">Synechococcus sp. (strain CC9605)</name>
    <dbReference type="NCBI Taxonomy" id="110662"/>
    <lineage>
        <taxon>Bacteria</taxon>
        <taxon>Bacillati</taxon>
        <taxon>Cyanobacteriota</taxon>
        <taxon>Cyanophyceae</taxon>
        <taxon>Synechococcales</taxon>
        <taxon>Synechococcaceae</taxon>
        <taxon>Synechococcus</taxon>
    </lineage>
</organism>
<protein>
    <recommendedName>
        <fullName evidence="1">Thiamine-phosphate synthase</fullName>
        <shortName evidence="1">TP synthase</shortName>
        <shortName evidence="1">TPS</shortName>
        <ecNumber evidence="1">2.5.1.3</ecNumber>
    </recommendedName>
    <alternativeName>
        <fullName evidence="1">Thiamine-phosphate pyrophosphorylase</fullName>
        <shortName evidence="1">TMP pyrophosphorylase</shortName>
        <shortName evidence="1">TMP-PPase</shortName>
    </alternativeName>
</protein>
<reference key="1">
    <citation type="submission" date="2005-07" db="EMBL/GenBank/DDBJ databases">
        <title>Complete sequence of Synechococcus sp. CC9605.</title>
        <authorList>
            <consortium name="US DOE Joint Genome Institute"/>
            <person name="Copeland A."/>
            <person name="Lucas S."/>
            <person name="Lapidus A."/>
            <person name="Barry K."/>
            <person name="Detter J.C."/>
            <person name="Glavina T."/>
            <person name="Hammon N."/>
            <person name="Israni S."/>
            <person name="Pitluck S."/>
            <person name="Schmutz J."/>
            <person name="Martinez M."/>
            <person name="Larimer F."/>
            <person name="Land M."/>
            <person name="Kyrpides N."/>
            <person name="Ivanova N."/>
            <person name="Richardson P."/>
        </authorList>
    </citation>
    <scope>NUCLEOTIDE SEQUENCE [LARGE SCALE GENOMIC DNA]</scope>
    <source>
        <strain>CC9605</strain>
    </source>
</reference>
<evidence type="ECO:0000255" key="1">
    <source>
        <dbReference type="HAMAP-Rule" id="MF_01327"/>
    </source>
</evidence>
<evidence type="ECO:0000256" key="2">
    <source>
        <dbReference type="SAM" id="MobiDB-lite"/>
    </source>
</evidence>